<reference key="1">
    <citation type="journal article" date="1999" name="Biochem. J.">
        <title>Structure, alternative splicing and chromosomal localization of the cystatin-related epididymal spermatogenic gene.</title>
        <authorList>
            <person name="Cornwall G.A."/>
            <person name="Hsia N."/>
            <person name="Sutton H.G."/>
        </authorList>
    </citation>
    <scope>NUCLEOTIDE SEQUENCE [GENOMIC DNA / MRNA]</scope>
    <source>
        <strain>C3H/HeJ</strain>
        <strain>CD-1</strain>
    </source>
</reference>
<reference key="2">
    <citation type="journal article" date="2005" name="Science">
        <title>The transcriptional landscape of the mammalian genome.</title>
        <authorList>
            <person name="Carninci P."/>
            <person name="Kasukawa T."/>
            <person name="Katayama S."/>
            <person name="Gough J."/>
            <person name="Frith M.C."/>
            <person name="Maeda N."/>
            <person name="Oyama R."/>
            <person name="Ravasi T."/>
            <person name="Lenhard B."/>
            <person name="Wells C."/>
            <person name="Kodzius R."/>
            <person name="Shimokawa K."/>
            <person name="Bajic V.B."/>
            <person name="Brenner S.E."/>
            <person name="Batalov S."/>
            <person name="Forrest A.R."/>
            <person name="Zavolan M."/>
            <person name="Davis M.J."/>
            <person name="Wilming L.G."/>
            <person name="Aidinis V."/>
            <person name="Allen J.E."/>
            <person name="Ambesi-Impiombato A."/>
            <person name="Apweiler R."/>
            <person name="Aturaliya R.N."/>
            <person name="Bailey T.L."/>
            <person name="Bansal M."/>
            <person name="Baxter L."/>
            <person name="Beisel K.W."/>
            <person name="Bersano T."/>
            <person name="Bono H."/>
            <person name="Chalk A.M."/>
            <person name="Chiu K.P."/>
            <person name="Choudhary V."/>
            <person name="Christoffels A."/>
            <person name="Clutterbuck D.R."/>
            <person name="Crowe M.L."/>
            <person name="Dalla E."/>
            <person name="Dalrymple B.P."/>
            <person name="de Bono B."/>
            <person name="Della Gatta G."/>
            <person name="di Bernardo D."/>
            <person name="Down T."/>
            <person name="Engstrom P."/>
            <person name="Fagiolini M."/>
            <person name="Faulkner G."/>
            <person name="Fletcher C.F."/>
            <person name="Fukushima T."/>
            <person name="Furuno M."/>
            <person name="Futaki S."/>
            <person name="Gariboldi M."/>
            <person name="Georgii-Hemming P."/>
            <person name="Gingeras T.R."/>
            <person name="Gojobori T."/>
            <person name="Green R.E."/>
            <person name="Gustincich S."/>
            <person name="Harbers M."/>
            <person name="Hayashi Y."/>
            <person name="Hensch T.K."/>
            <person name="Hirokawa N."/>
            <person name="Hill D."/>
            <person name="Huminiecki L."/>
            <person name="Iacono M."/>
            <person name="Ikeo K."/>
            <person name="Iwama A."/>
            <person name="Ishikawa T."/>
            <person name="Jakt M."/>
            <person name="Kanapin A."/>
            <person name="Katoh M."/>
            <person name="Kawasawa Y."/>
            <person name="Kelso J."/>
            <person name="Kitamura H."/>
            <person name="Kitano H."/>
            <person name="Kollias G."/>
            <person name="Krishnan S.P."/>
            <person name="Kruger A."/>
            <person name="Kummerfeld S.K."/>
            <person name="Kurochkin I.V."/>
            <person name="Lareau L.F."/>
            <person name="Lazarevic D."/>
            <person name="Lipovich L."/>
            <person name="Liu J."/>
            <person name="Liuni S."/>
            <person name="McWilliam S."/>
            <person name="Madan Babu M."/>
            <person name="Madera M."/>
            <person name="Marchionni L."/>
            <person name="Matsuda H."/>
            <person name="Matsuzawa S."/>
            <person name="Miki H."/>
            <person name="Mignone F."/>
            <person name="Miyake S."/>
            <person name="Morris K."/>
            <person name="Mottagui-Tabar S."/>
            <person name="Mulder N."/>
            <person name="Nakano N."/>
            <person name="Nakauchi H."/>
            <person name="Ng P."/>
            <person name="Nilsson R."/>
            <person name="Nishiguchi S."/>
            <person name="Nishikawa S."/>
            <person name="Nori F."/>
            <person name="Ohara O."/>
            <person name="Okazaki Y."/>
            <person name="Orlando V."/>
            <person name="Pang K.C."/>
            <person name="Pavan W.J."/>
            <person name="Pavesi G."/>
            <person name="Pesole G."/>
            <person name="Petrovsky N."/>
            <person name="Piazza S."/>
            <person name="Reed J."/>
            <person name="Reid J.F."/>
            <person name="Ring B.Z."/>
            <person name="Ringwald M."/>
            <person name="Rost B."/>
            <person name="Ruan Y."/>
            <person name="Salzberg S.L."/>
            <person name="Sandelin A."/>
            <person name="Schneider C."/>
            <person name="Schoenbach C."/>
            <person name="Sekiguchi K."/>
            <person name="Semple C.A."/>
            <person name="Seno S."/>
            <person name="Sessa L."/>
            <person name="Sheng Y."/>
            <person name="Shibata Y."/>
            <person name="Shimada H."/>
            <person name="Shimada K."/>
            <person name="Silva D."/>
            <person name="Sinclair B."/>
            <person name="Sperling S."/>
            <person name="Stupka E."/>
            <person name="Sugiura K."/>
            <person name="Sultana R."/>
            <person name="Takenaka Y."/>
            <person name="Taki K."/>
            <person name="Tammoja K."/>
            <person name="Tan S.L."/>
            <person name="Tang S."/>
            <person name="Taylor M.S."/>
            <person name="Tegner J."/>
            <person name="Teichmann S.A."/>
            <person name="Ueda H.R."/>
            <person name="van Nimwegen E."/>
            <person name="Verardo R."/>
            <person name="Wei C.L."/>
            <person name="Yagi K."/>
            <person name="Yamanishi H."/>
            <person name="Zabarovsky E."/>
            <person name="Zhu S."/>
            <person name="Zimmer A."/>
            <person name="Hide W."/>
            <person name="Bult C."/>
            <person name="Grimmond S.M."/>
            <person name="Teasdale R.D."/>
            <person name="Liu E.T."/>
            <person name="Brusic V."/>
            <person name="Quackenbush J."/>
            <person name="Wahlestedt C."/>
            <person name="Mattick J.S."/>
            <person name="Hume D.A."/>
            <person name="Kai C."/>
            <person name="Sasaki D."/>
            <person name="Tomaru Y."/>
            <person name="Fukuda S."/>
            <person name="Kanamori-Katayama M."/>
            <person name="Suzuki M."/>
            <person name="Aoki J."/>
            <person name="Arakawa T."/>
            <person name="Iida J."/>
            <person name="Imamura K."/>
            <person name="Itoh M."/>
            <person name="Kato T."/>
            <person name="Kawaji H."/>
            <person name="Kawagashira N."/>
            <person name="Kawashima T."/>
            <person name="Kojima M."/>
            <person name="Kondo S."/>
            <person name="Konno H."/>
            <person name="Nakano K."/>
            <person name="Ninomiya N."/>
            <person name="Nishio T."/>
            <person name="Okada M."/>
            <person name="Plessy C."/>
            <person name="Shibata K."/>
            <person name="Shiraki T."/>
            <person name="Suzuki S."/>
            <person name="Tagami M."/>
            <person name="Waki K."/>
            <person name="Watahiki A."/>
            <person name="Okamura-Oho Y."/>
            <person name="Suzuki H."/>
            <person name="Kawai J."/>
            <person name="Hayashizaki Y."/>
        </authorList>
    </citation>
    <scope>NUCLEOTIDE SEQUENCE [LARGE SCALE MRNA]</scope>
    <source>
        <strain>C57BL/6J</strain>
        <tissue>Testis</tissue>
    </source>
</reference>
<reference key="3">
    <citation type="journal article" date="2004" name="Genome Res.">
        <title>The status, quality, and expansion of the NIH full-length cDNA project: the Mammalian Gene Collection (MGC).</title>
        <authorList>
            <consortium name="The MGC Project Team"/>
        </authorList>
    </citation>
    <scope>NUCLEOTIDE SEQUENCE [LARGE SCALE MRNA]</scope>
    <source>
        <tissue>Testis</tissue>
    </source>
</reference>
<reference key="4">
    <citation type="journal article" date="1992" name="Mol. Endocrinol.">
        <title>The CRES gene: a unique testis-regulated gene related to the cystatin family is highly restricted in its expression to the proximal region of the mouse epididymis.</title>
        <authorList>
            <person name="Cornwall G.A."/>
            <person name="Orgebin-Crist M.-C."/>
            <person name="Hann S.R."/>
        </authorList>
    </citation>
    <scope>NUCLEOTIDE SEQUENCE [MRNA] OF 4-142</scope>
    <source>
        <tissue>Epididymis</tissue>
    </source>
</reference>
<reference key="5">
    <citation type="journal article" date="2010" name="Cell">
        <title>A tissue-specific atlas of mouse protein phosphorylation and expression.</title>
        <authorList>
            <person name="Huttlin E.L."/>
            <person name="Jedrychowski M.P."/>
            <person name="Elias J.E."/>
            <person name="Goswami T."/>
            <person name="Rad R."/>
            <person name="Beausoleil S.A."/>
            <person name="Villen J."/>
            <person name="Haas W."/>
            <person name="Sowa M.E."/>
            <person name="Gygi S.P."/>
        </authorList>
    </citation>
    <scope>IDENTIFICATION BY MASS SPECTROMETRY [LARGE SCALE ANALYSIS]</scope>
    <source>
        <tissue>Testis</tissue>
    </source>
</reference>
<accession>P32766</accession>
<accession>O89102</accession>
<accession>Q543A7</accession>
<organism>
    <name type="scientific">Mus musculus</name>
    <name type="common">Mouse</name>
    <dbReference type="NCBI Taxonomy" id="10090"/>
    <lineage>
        <taxon>Eukaryota</taxon>
        <taxon>Metazoa</taxon>
        <taxon>Chordata</taxon>
        <taxon>Craniata</taxon>
        <taxon>Vertebrata</taxon>
        <taxon>Euteleostomi</taxon>
        <taxon>Mammalia</taxon>
        <taxon>Eutheria</taxon>
        <taxon>Euarchontoglires</taxon>
        <taxon>Glires</taxon>
        <taxon>Rodentia</taxon>
        <taxon>Myomorpha</taxon>
        <taxon>Muroidea</taxon>
        <taxon>Muridae</taxon>
        <taxon>Murinae</taxon>
        <taxon>Mus</taxon>
        <taxon>Mus</taxon>
    </lineage>
</organism>
<dbReference type="EMBL" id="AF091503">
    <property type="protein sequence ID" value="AAC61754.1"/>
    <property type="molecule type" value="Genomic_DNA"/>
</dbReference>
<dbReference type="EMBL" id="AK018943">
    <property type="protein sequence ID" value="BAB31489.1"/>
    <property type="molecule type" value="mRNA"/>
</dbReference>
<dbReference type="EMBL" id="AK054409">
    <property type="protein sequence ID" value="BAC35768.1"/>
    <property type="molecule type" value="mRNA"/>
</dbReference>
<dbReference type="EMBL" id="AK161808">
    <property type="protein sequence ID" value="BAE36585.1"/>
    <property type="molecule type" value="mRNA"/>
</dbReference>
<dbReference type="EMBL" id="BC049753">
    <property type="protein sequence ID" value="AAH49753.1"/>
    <property type="molecule type" value="mRNA"/>
</dbReference>
<dbReference type="EMBL" id="AF090691">
    <property type="protein sequence ID" value="AAC36316.1"/>
    <property type="molecule type" value="mRNA"/>
</dbReference>
<dbReference type="EMBL" id="S49926">
    <property type="protein sequence ID" value="AAC35390.1"/>
    <property type="molecule type" value="mRNA"/>
</dbReference>
<dbReference type="CCDS" id="CCDS16848.1"/>
<dbReference type="PIR" id="A45361">
    <property type="entry name" value="A45361"/>
</dbReference>
<dbReference type="RefSeq" id="NP_034108.1">
    <property type="nucleotide sequence ID" value="NM_009978.2"/>
</dbReference>
<dbReference type="RefSeq" id="XP_006498721.1">
    <property type="nucleotide sequence ID" value="XM_006498658.5"/>
</dbReference>
<dbReference type="RefSeq" id="XP_006498722.1">
    <property type="nucleotide sequence ID" value="XM_006498659.4"/>
</dbReference>
<dbReference type="PDB" id="6UIO">
    <property type="method" value="X-ray"/>
    <property type="resolution" value="1.83 A"/>
    <property type="chains" value="A/B/C/D=31-142"/>
</dbReference>
<dbReference type="PDBsum" id="6UIO"/>
<dbReference type="SMR" id="P32766"/>
<dbReference type="FunCoup" id="P32766">
    <property type="interactions" value="31"/>
</dbReference>
<dbReference type="STRING" id="10090.ENSMUSP00000105573"/>
<dbReference type="MEROPS" id="I25.027"/>
<dbReference type="GlyCosmos" id="P32766">
    <property type="glycosylation" value="2 sites, No reported glycans"/>
</dbReference>
<dbReference type="GlyGen" id="P32766">
    <property type="glycosylation" value="2 sites, 1 N-linked glycan (1 site)"/>
</dbReference>
<dbReference type="PhosphoSitePlus" id="P32766"/>
<dbReference type="SwissPalm" id="P32766"/>
<dbReference type="PaxDb" id="10090-ENSMUSP00000028931"/>
<dbReference type="ProteomicsDB" id="283968"/>
<dbReference type="Antibodypedia" id="1474">
    <property type="antibodies" value="228 antibodies from 31 providers"/>
</dbReference>
<dbReference type="DNASU" id="13012"/>
<dbReference type="Ensembl" id="ENSMUST00000028931.10">
    <property type="protein sequence ID" value="ENSMUSP00000028931.4"/>
    <property type="gene ID" value="ENSMUSG00000027442.11"/>
</dbReference>
<dbReference type="Ensembl" id="ENSMUST00000109947.2">
    <property type="protein sequence ID" value="ENSMUSP00000105573.2"/>
    <property type="gene ID" value="ENSMUSG00000027442.11"/>
</dbReference>
<dbReference type="GeneID" id="13012"/>
<dbReference type="KEGG" id="mmu:13012"/>
<dbReference type="UCSC" id="uc008mto.1">
    <property type="organism name" value="mouse"/>
</dbReference>
<dbReference type="AGR" id="MGI:107161"/>
<dbReference type="CTD" id="10047"/>
<dbReference type="MGI" id="MGI:107161">
    <property type="gene designation" value="Cst8"/>
</dbReference>
<dbReference type="VEuPathDB" id="HostDB:ENSMUSG00000027442"/>
<dbReference type="eggNOG" id="ENOG502T6MT">
    <property type="taxonomic scope" value="Eukaryota"/>
</dbReference>
<dbReference type="GeneTree" id="ENSGT00940000162294"/>
<dbReference type="HOGENOM" id="CLU_118168_2_2_1"/>
<dbReference type="InParanoid" id="P32766"/>
<dbReference type="OMA" id="MKKQCVD"/>
<dbReference type="OrthoDB" id="1908104at2759"/>
<dbReference type="PhylomeDB" id="P32766"/>
<dbReference type="BioGRID-ORCS" id="13012">
    <property type="hits" value="0 hits in 76 CRISPR screens"/>
</dbReference>
<dbReference type="ChiTaRS" id="Cst8">
    <property type="organism name" value="mouse"/>
</dbReference>
<dbReference type="PRO" id="PR:P32766"/>
<dbReference type="Proteomes" id="UP000000589">
    <property type="component" value="Chromosome 2"/>
</dbReference>
<dbReference type="RNAct" id="P32766">
    <property type="molecule type" value="protein"/>
</dbReference>
<dbReference type="Bgee" id="ENSMUSG00000027442">
    <property type="expression patterns" value="Expressed in seminiferous tubule of testis and 33 other cell types or tissues"/>
</dbReference>
<dbReference type="GO" id="GO:0009986">
    <property type="term" value="C:cell surface"/>
    <property type="evidence" value="ECO:0000314"/>
    <property type="project" value="MGI"/>
</dbReference>
<dbReference type="GO" id="GO:0005737">
    <property type="term" value="C:cytoplasm"/>
    <property type="evidence" value="ECO:0000314"/>
    <property type="project" value="MGI"/>
</dbReference>
<dbReference type="GO" id="GO:0005576">
    <property type="term" value="C:extracellular region"/>
    <property type="evidence" value="ECO:0000314"/>
    <property type="project" value="MGI"/>
</dbReference>
<dbReference type="GO" id="GO:0004869">
    <property type="term" value="F:cysteine-type endopeptidase inhibitor activity"/>
    <property type="evidence" value="ECO:0007669"/>
    <property type="project" value="UniProtKB-KW"/>
</dbReference>
<dbReference type="CDD" id="cd00042">
    <property type="entry name" value="CY"/>
    <property type="match status" value="1"/>
</dbReference>
<dbReference type="FunFam" id="3.10.450.10:FF:000026">
    <property type="entry name" value="CST8 isoform 2"/>
    <property type="match status" value="1"/>
</dbReference>
<dbReference type="Gene3D" id="3.10.450.10">
    <property type="match status" value="1"/>
</dbReference>
<dbReference type="InterPro" id="IPR000010">
    <property type="entry name" value="Cystatin_dom"/>
</dbReference>
<dbReference type="InterPro" id="IPR046350">
    <property type="entry name" value="Cystatin_sf"/>
</dbReference>
<dbReference type="InterPro" id="IPR052691">
    <property type="entry name" value="Sperm_Mat_Cystatin"/>
</dbReference>
<dbReference type="PANTHER" id="PTHR47010:SF1">
    <property type="entry name" value="CYSTATIN-8"/>
    <property type="match status" value="1"/>
</dbReference>
<dbReference type="PANTHER" id="PTHR47010">
    <property type="entry name" value="CYSTATIN-8-RELATED"/>
    <property type="match status" value="1"/>
</dbReference>
<dbReference type="Pfam" id="PF00031">
    <property type="entry name" value="Cystatin"/>
    <property type="match status" value="1"/>
</dbReference>
<dbReference type="SMART" id="SM00043">
    <property type="entry name" value="CY"/>
    <property type="match status" value="1"/>
</dbReference>
<dbReference type="SUPFAM" id="SSF54403">
    <property type="entry name" value="Cystatin/monellin"/>
    <property type="match status" value="1"/>
</dbReference>
<feature type="signal peptide" evidence="2">
    <location>
        <begin position="1"/>
        <end position="19"/>
    </location>
</feature>
<feature type="chain" id="PRO_0000006654" description="Cystatin-8">
    <location>
        <begin position="20"/>
        <end position="142"/>
    </location>
</feature>
<feature type="short sequence motif" description="Secondary area of contact" evidence="2">
    <location>
        <begin position="77"/>
        <end position="81"/>
    </location>
</feature>
<feature type="glycosylation site" description="N-linked (GlcNAc...) asparagine" evidence="2">
    <location>
        <position position="39"/>
    </location>
</feature>
<feature type="glycosylation site" description="N-linked (GlcNAc...) asparagine" evidence="2">
    <location>
        <position position="100"/>
    </location>
</feature>
<feature type="disulfide bond" evidence="1">
    <location>
        <begin position="95"/>
        <end position="105"/>
    </location>
</feature>
<feature type="disulfide bond" evidence="1">
    <location>
        <begin position="119"/>
        <end position="139"/>
    </location>
</feature>
<feature type="sequence conflict" description="In Ref. 4; AAC35390." evidence="3" ref="4">
    <original>PLWLSLILFIIP</original>
    <variation>GTRDEQVGESQK</variation>
    <location>
        <begin position="4"/>
        <end position="15"/>
    </location>
</feature>
<feature type="strand" evidence="4">
    <location>
        <begin position="34"/>
        <end position="37"/>
    </location>
</feature>
<feature type="helix" evidence="4">
    <location>
        <begin position="43"/>
        <end position="59"/>
    </location>
</feature>
<feature type="strand" evidence="4">
    <location>
        <begin position="63"/>
        <end position="100"/>
    </location>
</feature>
<feature type="turn" evidence="4">
    <location>
        <begin position="111"/>
        <end position="113"/>
    </location>
</feature>
<feature type="strand" evidence="4">
    <location>
        <begin position="116"/>
        <end position="126"/>
    </location>
</feature>
<feature type="helix" evidence="4">
    <location>
        <begin position="127"/>
        <end position="129"/>
    </location>
</feature>
<feature type="strand" evidence="4">
    <location>
        <begin position="131"/>
        <end position="141"/>
    </location>
</feature>
<keyword id="KW-0002">3D-structure</keyword>
<keyword id="KW-1015">Disulfide bond</keyword>
<keyword id="KW-0325">Glycoprotein</keyword>
<keyword id="KW-0646">Protease inhibitor</keyword>
<keyword id="KW-1185">Reference proteome</keyword>
<keyword id="KW-0964">Secreted</keyword>
<keyword id="KW-0732">Signal</keyword>
<keyword id="KW-0789">Thiol protease inhibitor</keyword>
<comment type="function">
    <text>Performs a specialized role during sperm development and maturation.</text>
</comment>
<comment type="subcellular location">
    <subcellularLocation>
        <location>Secreted</location>
    </subcellularLocation>
</comment>
<comment type="tissue specificity">
    <text>Proximal caput region of the epididymis. Lower expression in the testis. Within the testis it is localized to the elongating spermatids, whereas within the epididymis it is exclusively synthesized by the proximal caput epithelium.</text>
</comment>
<comment type="induction">
    <text>Testicular factors or hormones other than androgens present in the testicular fluid may be involved in the regulation of CRES gene expression.</text>
</comment>
<comment type="similarity">
    <text evidence="3">Belongs to the cystatin family.</text>
</comment>
<name>CST8_MOUSE</name>
<protein>
    <recommendedName>
        <fullName>Cystatin-8</fullName>
    </recommendedName>
    <alternativeName>
        <fullName>Cystatin-related epididymal spermatogenic protein</fullName>
    </alternativeName>
    <alternativeName>
        <fullName>Cystatin-related epididymal-specific protein</fullName>
    </alternativeName>
</protein>
<proteinExistence type="evidence at protein level"/>
<sequence>MAKPLWLSLILFIIPVALAVGVDQSKNEVKAQNYFGSINISNANVKQCVWFAMKEYNKESEDKYVFLVDKILHAKLQITDRMEYQIDVQISRSNCKKPLNNTENCIPQKKPELEKKMSCSFLVGALPWNGEFNLLSKECKDV</sequence>
<evidence type="ECO:0000250" key="1"/>
<evidence type="ECO:0000255" key="2"/>
<evidence type="ECO:0000305" key="3"/>
<evidence type="ECO:0007829" key="4">
    <source>
        <dbReference type="PDB" id="6UIO"/>
    </source>
</evidence>
<gene>
    <name type="primary">Cst8</name>
    <name type="synonym">Cres</name>
</gene>